<reference key="1">
    <citation type="submission" date="2009-01" db="EMBL/GenBank/DDBJ databases">
        <title>Complete sequence of chromosome of Arthrobacter chlorophenolicus A6.</title>
        <authorList>
            <consortium name="US DOE Joint Genome Institute"/>
            <person name="Lucas S."/>
            <person name="Copeland A."/>
            <person name="Lapidus A."/>
            <person name="Glavina del Rio T."/>
            <person name="Tice H."/>
            <person name="Bruce D."/>
            <person name="Goodwin L."/>
            <person name="Pitluck S."/>
            <person name="Goltsman E."/>
            <person name="Clum A."/>
            <person name="Larimer F."/>
            <person name="Land M."/>
            <person name="Hauser L."/>
            <person name="Kyrpides N."/>
            <person name="Mikhailova N."/>
            <person name="Jansson J."/>
            <person name="Richardson P."/>
        </authorList>
    </citation>
    <scope>NUCLEOTIDE SEQUENCE [LARGE SCALE GENOMIC DNA]</scope>
    <source>
        <strain>ATCC 700700 / DSM 12829 / CIP 107037 / JCM 12360 / KCTC 9906 / NCIMB 13794 / A6</strain>
    </source>
</reference>
<proteinExistence type="inferred from homology"/>
<organism>
    <name type="scientific">Pseudarthrobacter chlorophenolicus (strain ATCC 700700 / DSM 12829 / CIP 107037 / JCM 12360 / KCTC 9906 / NCIMB 13794 / A6)</name>
    <name type="common">Arthrobacter chlorophenolicus</name>
    <dbReference type="NCBI Taxonomy" id="452863"/>
    <lineage>
        <taxon>Bacteria</taxon>
        <taxon>Bacillati</taxon>
        <taxon>Actinomycetota</taxon>
        <taxon>Actinomycetes</taxon>
        <taxon>Micrococcales</taxon>
        <taxon>Micrococcaceae</taxon>
        <taxon>Pseudarthrobacter</taxon>
    </lineage>
</organism>
<gene>
    <name evidence="1" type="primary">carB</name>
    <name type="ordered locus">Achl_1999</name>
</gene>
<sequence length="1109" mass="119243">MPKRTDLKSVLVIGSGPIVIGQAAEFDYSGTQALRVLKEEGLRVILVNSNPATIMTDPEFADATYIEPITPEVVEKIIAKERPDAVLPTLGGQTALNTAIALDKNGVLEKYNVELIGANIAAIELGEDREKFKGVVERCGAESARSHIIHTMDEALEAAKDLGYPMVVRPSFTMGGLGSGLAYNEDDLRRIVGQGLQYSPTSEVLLEESILGWKEYELEMMRDKNDNVVVVCSIENFDPVGVHTGDSITVAPALTLTDREYQKLRDVSIAVIREVGVDTGGCNIQFAIDPATGRVVVIEMNPRVSRSSALASKATGFAIAKIATKLSLGYTLDEIPNDITQKTPASFEPTLDYVVVKVPRFAFEKFPAADNTLTTTMKSVGEAMAMGRNFTEALQKALRSLEQKGSQLDFSSVPEYEVAELIEKAKRPTTDRLYQVQRALLGGATVEQLFEATKIDPWFLDQLELLNEVSREIRQAGALTTDMLQRAKRHGFSDEQIGALTHNSEAVVRGVRQALGIRPVYKTVDTCAAEFAAYTPYHYSAYDEEDEVALHSKPSILILGSGPNRIGQGIEFDYSCVHASMALRKAGYETVMVNCNPETVSTDYDVSTRLYFEPLTLEDVLEVIAAEERTGGVMGVFVQLGGQTPLKLAQQLADAGVPILGTSPEAIDLAEHRGAFSRVLDKAGLVSPKNGTAVSFEDAKKIADEIGYPVLVRPSYVLGGRGMEIVYDEPNLSRYIANATEITPDHPVLIDRFLEDAVEIDVDALFDGTDMYLGGIMEHIEEAGIHSGDSACVLPPITLGSNVVERVRTATRAIAEGVGVRGLINIQFALASDVLYVLEANPRASRTVPFVSKATGVQMAKAAALIGTGVTINQLRTAYKMLPETGDGSTLPLDAPVAVKEAVLPFSRFRTPEGKVVDSLLGPEMRSTGEVMGIDKHFDTAFAKSQAGANNALPTEGKVFVSVANRDKRSVIMGVKRLSDLGFEIVSTGGTADVLRRNGIAATPVRKVAEGSSAEGEGTIADLVVAGEIDMVFNTPSGGEARSDGYELRAAATSIGIPCITTVAEFNAAVQAIEAMRTYEWSVTSLQEHAAALGESQKAAAAKADLQHA</sequence>
<accession>B8H8U5</accession>
<dbReference type="EC" id="6.3.4.16" evidence="1"/>
<dbReference type="EC" id="6.3.5.5" evidence="1"/>
<dbReference type="EMBL" id="CP001341">
    <property type="protein sequence ID" value="ACL39973.1"/>
    <property type="molecule type" value="Genomic_DNA"/>
</dbReference>
<dbReference type="RefSeq" id="WP_015937191.1">
    <property type="nucleotide sequence ID" value="NC_011886.1"/>
</dbReference>
<dbReference type="SMR" id="B8H8U5"/>
<dbReference type="STRING" id="452863.Achl_1999"/>
<dbReference type="KEGG" id="ach:Achl_1999"/>
<dbReference type="eggNOG" id="COG0458">
    <property type="taxonomic scope" value="Bacteria"/>
</dbReference>
<dbReference type="HOGENOM" id="CLU_000513_1_3_11"/>
<dbReference type="OrthoDB" id="9804197at2"/>
<dbReference type="UniPathway" id="UPA00068">
    <property type="reaction ID" value="UER00171"/>
</dbReference>
<dbReference type="UniPathway" id="UPA00070">
    <property type="reaction ID" value="UER00115"/>
</dbReference>
<dbReference type="Proteomes" id="UP000002505">
    <property type="component" value="Chromosome"/>
</dbReference>
<dbReference type="GO" id="GO:0005737">
    <property type="term" value="C:cytoplasm"/>
    <property type="evidence" value="ECO:0007669"/>
    <property type="project" value="TreeGrafter"/>
</dbReference>
<dbReference type="GO" id="GO:0005524">
    <property type="term" value="F:ATP binding"/>
    <property type="evidence" value="ECO:0007669"/>
    <property type="project" value="UniProtKB-UniRule"/>
</dbReference>
<dbReference type="GO" id="GO:0004087">
    <property type="term" value="F:carbamoyl-phosphate synthase (ammonia) activity"/>
    <property type="evidence" value="ECO:0007669"/>
    <property type="project" value="RHEA"/>
</dbReference>
<dbReference type="GO" id="GO:0004088">
    <property type="term" value="F:carbamoyl-phosphate synthase (glutamine-hydrolyzing) activity"/>
    <property type="evidence" value="ECO:0007669"/>
    <property type="project" value="UniProtKB-UniRule"/>
</dbReference>
<dbReference type="GO" id="GO:0046872">
    <property type="term" value="F:metal ion binding"/>
    <property type="evidence" value="ECO:0007669"/>
    <property type="project" value="UniProtKB-KW"/>
</dbReference>
<dbReference type="GO" id="GO:0044205">
    <property type="term" value="P:'de novo' UMP biosynthetic process"/>
    <property type="evidence" value="ECO:0007669"/>
    <property type="project" value="UniProtKB-UniRule"/>
</dbReference>
<dbReference type="GO" id="GO:0006541">
    <property type="term" value="P:glutamine metabolic process"/>
    <property type="evidence" value="ECO:0007669"/>
    <property type="project" value="TreeGrafter"/>
</dbReference>
<dbReference type="GO" id="GO:0006526">
    <property type="term" value="P:L-arginine biosynthetic process"/>
    <property type="evidence" value="ECO:0007669"/>
    <property type="project" value="UniProtKB-UniRule"/>
</dbReference>
<dbReference type="CDD" id="cd01424">
    <property type="entry name" value="MGS_CPS_II"/>
    <property type="match status" value="1"/>
</dbReference>
<dbReference type="FunFam" id="1.10.1030.10:FF:000002">
    <property type="entry name" value="Carbamoyl-phosphate synthase large chain"/>
    <property type="match status" value="1"/>
</dbReference>
<dbReference type="FunFam" id="3.30.1490.20:FF:000001">
    <property type="entry name" value="Carbamoyl-phosphate synthase large chain"/>
    <property type="match status" value="1"/>
</dbReference>
<dbReference type="FunFam" id="3.30.470.20:FF:000007">
    <property type="entry name" value="Carbamoyl-phosphate synthase large chain"/>
    <property type="match status" value="1"/>
</dbReference>
<dbReference type="FunFam" id="3.30.470.20:FF:000014">
    <property type="entry name" value="Carbamoyl-phosphate synthase large chain"/>
    <property type="match status" value="1"/>
</dbReference>
<dbReference type="FunFam" id="3.40.50.20:FF:000001">
    <property type="entry name" value="Carbamoyl-phosphate synthase large chain"/>
    <property type="match status" value="2"/>
</dbReference>
<dbReference type="Gene3D" id="3.40.50.20">
    <property type="match status" value="2"/>
</dbReference>
<dbReference type="Gene3D" id="3.30.1490.20">
    <property type="entry name" value="ATP-grasp fold, A domain"/>
    <property type="match status" value="1"/>
</dbReference>
<dbReference type="Gene3D" id="3.30.470.20">
    <property type="entry name" value="ATP-grasp fold, B domain"/>
    <property type="match status" value="2"/>
</dbReference>
<dbReference type="Gene3D" id="1.10.1030.10">
    <property type="entry name" value="Carbamoyl-phosphate synthetase, large subunit oligomerisation domain"/>
    <property type="match status" value="1"/>
</dbReference>
<dbReference type="Gene3D" id="3.40.50.1380">
    <property type="entry name" value="Methylglyoxal synthase-like domain"/>
    <property type="match status" value="1"/>
</dbReference>
<dbReference type="HAMAP" id="MF_01210_B">
    <property type="entry name" value="CPSase_L_chain_B"/>
    <property type="match status" value="1"/>
</dbReference>
<dbReference type="InterPro" id="IPR011761">
    <property type="entry name" value="ATP-grasp"/>
</dbReference>
<dbReference type="InterPro" id="IPR013815">
    <property type="entry name" value="ATP_grasp_subdomain_1"/>
</dbReference>
<dbReference type="InterPro" id="IPR006275">
    <property type="entry name" value="CarbamoylP_synth_lsu"/>
</dbReference>
<dbReference type="InterPro" id="IPR005480">
    <property type="entry name" value="CarbamoylP_synth_lsu_oligo"/>
</dbReference>
<dbReference type="InterPro" id="IPR036897">
    <property type="entry name" value="CarbamoylP_synth_lsu_oligo_sf"/>
</dbReference>
<dbReference type="InterPro" id="IPR005479">
    <property type="entry name" value="CbamoylP_synth_lsu-like_ATP-bd"/>
</dbReference>
<dbReference type="InterPro" id="IPR005483">
    <property type="entry name" value="CbamoylP_synth_lsu_CPSase_dom"/>
</dbReference>
<dbReference type="InterPro" id="IPR011607">
    <property type="entry name" value="MGS-like_dom"/>
</dbReference>
<dbReference type="InterPro" id="IPR036914">
    <property type="entry name" value="MGS-like_dom_sf"/>
</dbReference>
<dbReference type="InterPro" id="IPR033937">
    <property type="entry name" value="MGS_CPS_CarB"/>
</dbReference>
<dbReference type="InterPro" id="IPR016185">
    <property type="entry name" value="PreATP-grasp_dom_sf"/>
</dbReference>
<dbReference type="NCBIfam" id="TIGR01369">
    <property type="entry name" value="CPSaseII_lrg"/>
    <property type="match status" value="1"/>
</dbReference>
<dbReference type="NCBIfam" id="NF003671">
    <property type="entry name" value="PRK05294.1"/>
    <property type="match status" value="1"/>
</dbReference>
<dbReference type="NCBIfam" id="NF009455">
    <property type="entry name" value="PRK12815.1"/>
    <property type="match status" value="1"/>
</dbReference>
<dbReference type="PANTHER" id="PTHR11405:SF53">
    <property type="entry name" value="CARBAMOYL-PHOSPHATE SYNTHASE [AMMONIA], MITOCHONDRIAL"/>
    <property type="match status" value="1"/>
</dbReference>
<dbReference type="PANTHER" id="PTHR11405">
    <property type="entry name" value="CARBAMOYLTRANSFERASE FAMILY MEMBER"/>
    <property type="match status" value="1"/>
</dbReference>
<dbReference type="Pfam" id="PF02786">
    <property type="entry name" value="CPSase_L_D2"/>
    <property type="match status" value="2"/>
</dbReference>
<dbReference type="Pfam" id="PF02787">
    <property type="entry name" value="CPSase_L_D3"/>
    <property type="match status" value="1"/>
</dbReference>
<dbReference type="Pfam" id="PF02142">
    <property type="entry name" value="MGS"/>
    <property type="match status" value="1"/>
</dbReference>
<dbReference type="PRINTS" id="PR00098">
    <property type="entry name" value="CPSASE"/>
</dbReference>
<dbReference type="SMART" id="SM01096">
    <property type="entry name" value="CPSase_L_D3"/>
    <property type="match status" value="1"/>
</dbReference>
<dbReference type="SMART" id="SM00851">
    <property type="entry name" value="MGS"/>
    <property type="match status" value="1"/>
</dbReference>
<dbReference type="SUPFAM" id="SSF48108">
    <property type="entry name" value="Carbamoyl phosphate synthetase, large subunit connection domain"/>
    <property type="match status" value="1"/>
</dbReference>
<dbReference type="SUPFAM" id="SSF56059">
    <property type="entry name" value="Glutathione synthetase ATP-binding domain-like"/>
    <property type="match status" value="2"/>
</dbReference>
<dbReference type="SUPFAM" id="SSF52335">
    <property type="entry name" value="Methylglyoxal synthase-like"/>
    <property type="match status" value="1"/>
</dbReference>
<dbReference type="SUPFAM" id="SSF52440">
    <property type="entry name" value="PreATP-grasp domain"/>
    <property type="match status" value="2"/>
</dbReference>
<dbReference type="PROSITE" id="PS50975">
    <property type="entry name" value="ATP_GRASP"/>
    <property type="match status" value="2"/>
</dbReference>
<dbReference type="PROSITE" id="PS00866">
    <property type="entry name" value="CPSASE_1"/>
    <property type="match status" value="2"/>
</dbReference>
<dbReference type="PROSITE" id="PS00867">
    <property type="entry name" value="CPSASE_2"/>
    <property type="match status" value="2"/>
</dbReference>
<dbReference type="PROSITE" id="PS51855">
    <property type="entry name" value="MGS"/>
    <property type="match status" value="1"/>
</dbReference>
<feature type="chain" id="PRO_1000164702" description="Carbamoyl phosphate synthase large chain">
    <location>
        <begin position="1"/>
        <end position="1109"/>
    </location>
</feature>
<feature type="domain" description="ATP-grasp 1" evidence="1">
    <location>
        <begin position="133"/>
        <end position="328"/>
    </location>
</feature>
<feature type="domain" description="ATP-grasp 2" evidence="1">
    <location>
        <begin position="677"/>
        <end position="868"/>
    </location>
</feature>
<feature type="domain" description="MGS-like" evidence="1">
    <location>
        <begin position="951"/>
        <end position="1096"/>
    </location>
</feature>
<feature type="region of interest" description="Carboxyphosphate synthetic domain" evidence="1">
    <location>
        <begin position="1"/>
        <end position="402"/>
    </location>
</feature>
<feature type="region of interest" description="Oligomerization domain" evidence="1">
    <location>
        <begin position="403"/>
        <end position="546"/>
    </location>
</feature>
<feature type="region of interest" description="Carbamoyl phosphate synthetic domain" evidence="1">
    <location>
        <begin position="547"/>
        <end position="950"/>
    </location>
</feature>
<feature type="region of interest" description="Allosteric domain" evidence="1">
    <location>
        <begin position="951"/>
        <end position="1109"/>
    </location>
</feature>
<feature type="binding site" evidence="1">
    <location>
        <position position="129"/>
    </location>
    <ligand>
        <name>ATP</name>
        <dbReference type="ChEBI" id="CHEBI:30616"/>
        <label>1</label>
    </ligand>
</feature>
<feature type="binding site" evidence="1">
    <location>
        <position position="169"/>
    </location>
    <ligand>
        <name>ATP</name>
        <dbReference type="ChEBI" id="CHEBI:30616"/>
        <label>1</label>
    </ligand>
</feature>
<feature type="binding site" evidence="1">
    <location>
        <position position="175"/>
    </location>
    <ligand>
        <name>ATP</name>
        <dbReference type="ChEBI" id="CHEBI:30616"/>
        <label>1</label>
    </ligand>
</feature>
<feature type="binding site" evidence="1">
    <location>
        <position position="176"/>
    </location>
    <ligand>
        <name>ATP</name>
        <dbReference type="ChEBI" id="CHEBI:30616"/>
        <label>1</label>
    </ligand>
</feature>
<feature type="binding site" evidence="1">
    <location>
        <position position="208"/>
    </location>
    <ligand>
        <name>ATP</name>
        <dbReference type="ChEBI" id="CHEBI:30616"/>
        <label>1</label>
    </ligand>
</feature>
<feature type="binding site" evidence="1">
    <location>
        <position position="210"/>
    </location>
    <ligand>
        <name>ATP</name>
        <dbReference type="ChEBI" id="CHEBI:30616"/>
        <label>1</label>
    </ligand>
</feature>
<feature type="binding site" evidence="1">
    <location>
        <position position="215"/>
    </location>
    <ligand>
        <name>ATP</name>
        <dbReference type="ChEBI" id="CHEBI:30616"/>
        <label>1</label>
    </ligand>
</feature>
<feature type="binding site" evidence="1">
    <location>
        <position position="241"/>
    </location>
    <ligand>
        <name>ATP</name>
        <dbReference type="ChEBI" id="CHEBI:30616"/>
        <label>1</label>
    </ligand>
</feature>
<feature type="binding site" evidence="1">
    <location>
        <position position="242"/>
    </location>
    <ligand>
        <name>ATP</name>
        <dbReference type="ChEBI" id="CHEBI:30616"/>
        <label>1</label>
    </ligand>
</feature>
<feature type="binding site" evidence="1">
    <location>
        <position position="243"/>
    </location>
    <ligand>
        <name>ATP</name>
        <dbReference type="ChEBI" id="CHEBI:30616"/>
        <label>1</label>
    </ligand>
</feature>
<feature type="binding site" evidence="1">
    <location>
        <position position="285"/>
    </location>
    <ligand>
        <name>ATP</name>
        <dbReference type="ChEBI" id="CHEBI:30616"/>
        <label>1</label>
    </ligand>
</feature>
<feature type="binding site" evidence="1">
    <location>
        <position position="285"/>
    </location>
    <ligand>
        <name>Mg(2+)</name>
        <dbReference type="ChEBI" id="CHEBI:18420"/>
        <label>1</label>
    </ligand>
</feature>
<feature type="binding site" evidence="1">
    <location>
        <position position="285"/>
    </location>
    <ligand>
        <name>Mn(2+)</name>
        <dbReference type="ChEBI" id="CHEBI:29035"/>
        <label>1</label>
    </ligand>
</feature>
<feature type="binding site" evidence="1">
    <location>
        <position position="299"/>
    </location>
    <ligand>
        <name>ATP</name>
        <dbReference type="ChEBI" id="CHEBI:30616"/>
        <label>1</label>
    </ligand>
</feature>
<feature type="binding site" evidence="1">
    <location>
        <position position="299"/>
    </location>
    <ligand>
        <name>Mg(2+)</name>
        <dbReference type="ChEBI" id="CHEBI:18420"/>
        <label>1</label>
    </ligand>
</feature>
<feature type="binding site" evidence="1">
    <location>
        <position position="299"/>
    </location>
    <ligand>
        <name>Mg(2+)</name>
        <dbReference type="ChEBI" id="CHEBI:18420"/>
        <label>2</label>
    </ligand>
</feature>
<feature type="binding site" evidence="1">
    <location>
        <position position="299"/>
    </location>
    <ligand>
        <name>Mn(2+)</name>
        <dbReference type="ChEBI" id="CHEBI:29035"/>
        <label>1</label>
    </ligand>
</feature>
<feature type="binding site" evidence="1">
    <location>
        <position position="299"/>
    </location>
    <ligand>
        <name>Mn(2+)</name>
        <dbReference type="ChEBI" id="CHEBI:29035"/>
        <label>2</label>
    </ligand>
</feature>
<feature type="binding site" evidence="1">
    <location>
        <position position="301"/>
    </location>
    <ligand>
        <name>Mg(2+)</name>
        <dbReference type="ChEBI" id="CHEBI:18420"/>
        <label>2</label>
    </ligand>
</feature>
<feature type="binding site" evidence="1">
    <location>
        <position position="301"/>
    </location>
    <ligand>
        <name>Mn(2+)</name>
        <dbReference type="ChEBI" id="CHEBI:29035"/>
        <label>2</label>
    </ligand>
</feature>
<feature type="binding site" evidence="1">
    <location>
        <position position="713"/>
    </location>
    <ligand>
        <name>ATP</name>
        <dbReference type="ChEBI" id="CHEBI:30616"/>
        <label>2</label>
    </ligand>
</feature>
<feature type="binding site" evidence="1">
    <location>
        <position position="752"/>
    </location>
    <ligand>
        <name>ATP</name>
        <dbReference type="ChEBI" id="CHEBI:30616"/>
        <label>2</label>
    </ligand>
</feature>
<feature type="binding site" evidence="1">
    <location>
        <position position="754"/>
    </location>
    <ligand>
        <name>ATP</name>
        <dbReference type="ChEBI" id="CHEBI:30616"/>
        <label>2</label>
    </ligand>
</feature>
<feature type="binding site" evidence="1">
    <location>
        <position position="759"/>
    </location>
    <ligand>
        <name>ATP</name>
        <dbReference type="ChEBI" id="CHEBI:30616"/>
        <label>2</label>
    </ligand>
</feature>
<feature type="binding site" evidence="1">
    <location>
        <position position="784"/>
    </location>
    <ligand>
        <name>ATP</name>
        <dbReference type="ChEBI" id="CHEBI:30616"/>
        <label>2</label>
    </ligand>
</feature>
<feature type="binding site" evidence="1">
    <location>
        <position position="785"/>
    </location>
    <ligand>
        <name>ATP</name>
        <dbReference type="ChEBI" id="CHEBI:30616"/>
        <label>2</label>
    </ligand>
</feature>
<feature type="binding site" evidence="1">
    <location>
        <position position="786"/>
    </location>
    <ligand>
        <name>ATP</name>
        <dbReference type="ChEBI" id="CHEBI:30616"/>
        <label>2</label>
    </ligand>
</feature>
<feature type="binding site" evidence="1">
    <location>
        <position position="787"/>
    </location>
    <ligand>
        <name>ATP</name>
        <dbReference type="ChEBI" id="CHEBI:30616"/>
        <label>2</label>
    </ligand>
</feature>
<feature type="binding site" evidence="1">
    <location>
        <position position="827"/>
    </location>
    <ligand>
        <name>ATP</name>
        <dbReference type="ChEBI" id="CHEBI:30616"/>
        <label>2</label>
    </ligand>
</feature>
<feature type="binding site" evidence="1">
    <location>
        <position position="827"/>
    </location>
    <ligand>
        <name>Mg(2+)</name>
        <dbReference type="ChEBI" id="CHEBI:18420"/>
        <label>3</label>
    </ligand>
</feature>
<feature type="binding site" evidence="1">
    <location>
        <position position="827"/>
    </location>
    <ligand>
        <name>Mn(2+)</name>
        <dbReference type="ChEBI" id="CHEBI:29035"/>
        <label>3</label>
    </ligand>
</feature>
<feature type="binding site" evidence="1">
    <location>
        <position position="839"/>
    </location>
    <ligand>
        <name>ATP</name>
        <dbReference type="ChEBI" id="CHEBI:30616"/>
        <label>2</label>
    </ligand>
</feature>
<feature type="binding site" evidence="1">
    <location>
        <position position="839"/>
    </location>
    <ligand>
        <name>Mg(2+)</name>
        <dbReference type="ChEBI" id="CHEBI:18420"/>
        <label>3</label>
    </ligand>
</feature>
<feature type="binding site" evidence="1">
    <location>
        <position position="839"/>
    </location>
    <ligand>
        <name>Mg(2+)</name>
        <dbReference type="ChEBI" id="CHEBI:18420"/>
        <label>4</label>
    </ligand>
</feature>
<feature type="binding site" evidence="1">
    <location>
        <position position="839"/>
    </location>
    <ligand>
        <name>Mn(2+)</name>
        <dbReference type="ChEBI" id="CHEBI:29035"/>
        <label>3</label>
    </ligand>
</feature>
<feature type="binding site" evidence="1">
    <location>
        <position position="839"/>
    </location>
    <ligand>
        <name>Mn(2+)</name>
        <dbReference type="ChEBI" id="CHEBI:29035"/>
        <label>4</label>
    </ligand>
</feature>
<feature type="binding site" evidence="1">
    <location>
        <position position="841"/>
    </location>
    <ligand>
        <name>Mg(2+)</name>
        <dbReference type="ChEBI" id="CHEBI:18420"/>
        <label>4</label>
    </ligand>
</feature>
<feature type="binding site" evidence="1">
    <location>
        <position position="841"/>
    </location>
    <ligand>
        <name>Mn(2+)</name>
        <dbReference type="ChEBI" id="CHEBI:29035"/>
        <label>4</label>
    </ligand>
</feature>
<protein>
    <recommendedName>
        <fullName evidence="1">Carbamoyl phosphate synthase large chain</fullName>
        <ecNumber evidence="1">6.3.4.16</ecNumber>
        <ecNumber evidence="1">6.3.5.5</ecNumber>
    </recommendedName>
    <alternativeName>
        <fullName evidence="1">Carbamoyl phosphate synthetase ammonia chain</fullName>
    </alternativeName>
</protein>
<name>CARB_PSECP</name>
<evidence type="ECO:0000255" key="1">
    <source>
        <dbReference type="HAMAP-Rule" id="MF_01210"/>
    </source>
</evidence>
<comment type="function">
    <text evidence="1">Large subunit of the glutamine-dependent carbamoyl phosphate synthetase (CPSase). CPSase catalyzes the formation of carbamoyl phosphate from the ammonia moiety of glutamine, carbonate, and phosphate donated by ATP, constituting the first step of 2 biosynthetic pathways, one leading to arginine and/or urea and the other to pyrimidine nucleotides. The large subunit (synthetase) binds the substrates ammonia (free or transferred from glutamine from the small subunit), hydrogencarbonate and ATP and carries out an ATP-coupled ligase reaction, activating hydrogencarbonate by forming carboxy phosphate which reacts with ammonia to form carbamoyl phosphate.</text>
</comment>
<comment type="catalytic activity">
    <reaction evidence="1">
        <text>hydrogencarbonate + L-glutamine + 2 ATP + H2O = carbamoyl phosphate + L-glutamate + 2 ADP + phosphate + 2 H(+)</text>
        <dbReference type="Rhea" id="RHEA:18633"/>
        <dbReference type="ChEBI" id="CHEBI:15377"/>
        <dbReference type="ChEBI" id="CHEBI:15378"/>
        <dbReference type="ChEBI" id="CHEBI:17544"/>
        <dbReference type="ChEBI" id="CHEBI:29985"/>
        <dbReference type="ChEBI" id="CHEBI:30616"/>
        <dbReference type="ChEBI" id="CHEBI:43474"/>
        <dbReference type="ChEBI" id="CHEBI:58228"/>
        <dbReference type="ChEBI" id="CHEBI:58359"/>
        <dbReference type="ChEBI" id="CHEBI:456216"/>
        <dbReference type="EC" id="6.3.5.5"/>
    </reaction>
</comment>
<comment type="catalytic activity">
    <molecule>Carbamoyl phosphate synthase large chain</molecule>
    <reaction evidence="1">
        <text>hydrogencarbonate + NH4(+) + 2 ATP = carbamoyl phosphate + 2 ADP + phosphate + 2 H(+)</text>
        <dbReference type="Rhea" id="RHEA:18029"/>
        <dbReference type="ChEBI" id="CHEBI:15378"/>
        <dbReference type="ChEBI" id="CHEBI:17544"/>
        <dbReference type="ChEBI" id="CHEBI:28938"/>
        <dbReference type="ChEBI" id="CHEBI:30616"/>
        <dbReference type="ChEBI" id="CHEBI:43474"/>
        <dbReference type="ChEBI" id="CHEBI:58228"/>
        <dbReference type="ChEBI" id="CHEBI:456216"/>
        <dbReference type="EC" id="6.3.4.16"/>
    </reaction>
</comment>
<comment type="cofactor">
    <cofactor evidence="1">
        <name>Mg(2+)</name>
        <dbReference type="ChEBI" id="CHEBI:18420"/>
    </cofactor>
    <cofactor evidence="1">
        <name>Mn(2+)</name>
        <dbReference type="ChEBI" id="CHEBI:29035"/>
    </cofactor>
    <text evidence="1">Binds 4 Mg(2+) or Mn(2+) ions per subunit.</text>
</comment>
<comment type="pathway">
    <text evidence="1">Amino-acid biosynthesis; L-arginine biosynthesis; carbamoyl phosphate from bicarbonate: step 1/1.</text>
</comment>
<comment type="pathway">
    <text evidence="1">Pyrimidine metabolism; UMP biosynthesis via de novo pathway; (S)-dihydroorotate from bicarbonate: step 1/3.</text>
</comment>
<comment type="subunit">
    <text evidence="1">Composed of two chains; the small (or glutamine) chain promotes the hydrolysis of glutamine to ammonia, which is used by the large (or ammonia) chain to synthesize carbamoyl phosphate. Tetramer of heterodimers (alpha,beta)4.</text>
</comment>
<comment type="domain">
    <text evidence="1">The large subunit is composed of 2 ATP-grasp domains that are involved in binding the 2 ATP molecules needed for carbamoyl phosphate synthesis. The N-terminal ATP-grasp domain (referred to as the carboxyphosphate synthetic component) catalyzes the ATP-dependent phosphorylation of hydrogencarbonate to carboxyphosphate and the subsequent nucleophilic attack by ammonia to form a carbamate intermediate. The C-terminal ATP-grasp domain (referred to as the carbamoyl phosphate synthetic component) then catalyzes the phosphorylation of carbamate with the second ATP to form the end product carbamoyl phosphate. The reactive and unstable enzyme intermediates are sequentially channeled from one active site to the next through the interior of the protein over a distance of at least 96 A.</text>
</comment>
<comment type="similarity">
    <text evidence="1">Belongs to the CarB family.</text>
</comment>
<keyword id="KW-0028">Amino-acid biosynthesis</keyword>
<keyword id="KW-0055">Arginine biosynthesis</keyword>
<keyword id="KW-0067">ATP-binding</keyword>
<keyword id="KW-0436">Ligase</keyword>
<keyword id="KW-0460">Magnesium</keyword>
<keyword id="KW-0464">Manganese</keyword>
<keyword id="KW-0479">Metal-binding</keyword>
<keyword id="KW-0547">Nucleotide-binding</keyword>
<keyword id="KW-0665">Pyrimidine biosynthesis</keyword>
<keyword id="KW-0677">Repeat</keyword>